<name>ALLB_ECOL6</name>
<feature type="chain" id="PRO_0000317678" description="Allantoinase">
    <location>
        <begin position="1"/>
        <end position="453"/>
    </location>
</feature>
<feature type="binding site" evidence="1">
    <location>
        <position position="59"/>
    </location>
    <ligand>
        <name>Zn(2+)</name>
        <dbReference type="ChEBI" id="CHEBI:29105"/>
        <label>1</label>
    </ligand>
</feature>
<feature type="binding site" evidence="1">
    <location>
        <position position="61"/>
    </location>
    <ligand>
        <name>Zn(2+)</name>
        <dbReference type="ChEBI" id="CHEBI:29105"/>
        <label>1</label>
    </ligand>
</feature>
<feature type="binding site" description="via carbamate group" evidence="1">
    <location>
        <position position="146"/>
    </location>
    <ligand>
        <name>Zn(2+)</name>
        <dbReference type="ChEBI" id="CHEBI:29105"/>
        <label>1</label>
    </ligand>
</feature>
<feature type="binding site" description="via carbamate group" evidence="1">
    <location>
        <position position="146"/>
    </location>
    <ligand>
        <name>Zn(2+)</name>
        <dbReference type="ChEBI" id="CHEBI:29105"/>
        <label>2</label>
    </ligand>
</feature>
<feature type="binding site" evidence="1">
    <location>
        <position position="186"/>
    </location>
    <ligand>
        <name>Zn(2+)</name>
        <dbReference type="ChEBI" id="CHEBI:29105"/>
        <label>2</label>
    </ligand>
</feature>
<feature type="binding site" evidence="1">
    <location>
        <position position="242"/>
    </location>
    <ligand>
        <name>Zn(2+)</name>
        <dbReference type="ChEBI" id="CHEBI:29105"/>
        <label>2</label>
    </ligand>
</feature>
<feature type="binding site" evidence="1">
    <location>
        <position position="315"/>
    </location>
    <ligand>
        <name>Zn(2+)</name>
        <dbReference type="ChEBI" id="CHEBI:29105"/>
        <label>1</label>
    </ligand>
</feature>
<feature type="modified residue" description="N6-carboxylysine" evidence="1">
    <location>
        <position position="146"/>
    </location>
</feature>
<gene>
    <name evidence="1" type="primary">allB</name>
    <name type="synonym">ybbX</name>
    <name type="ordered locus">c0626</name>
</gene>
<proteinExistence type="inferred from homology"/>
<evidence type="ECO:0000255" key="1">
    <source>
        <dbReference type="HAMAP-Rule" id="MF_01645"/>
    </source>
</evidence>
<keyword id="KW-0378">Hydrolase</keyword>
<keyword id="KW-0479">Metal-binding</keyword>
<keyword id="KW-0659">Purine metabolism</keyword>
<keyword id="KW-1185">Reference proteome</keyword>
<keyword id="KW-0862">Zinc</keyword>
<dbReference type="EC" id="3.5.2.5" evidence="1"/>
<dbReference type="EMBL" id="AE014075">
    <property type="protein sequence ID" value="AAN79103.1"/>
    <property type="molecule type" value="Genomic_DNA"/>
</dbReference>
<dbReference type="RefSeq" id="WP_000006873.1">
    <property type="nucleotide sequence ID" value="NZ_CP051263.1"/>
</dbReference>
<dbReference type="SMR" id="Q8FK60"/>
<dbReference type="STRING" id="199310.c0626"/>
<dbReference type="KEGG" id="ecc:c0626"/>
<dbReference type="eggNOG" id="COG0044">
    <property type="taxonomic scope" value="Bacteria"/>
</dbReference>
<dbReference type="HOGENOM" id="CLU_015572_4_2_6"/>
<dbReference type="BioCyc" id="ECOL199310:C0626-MONOMER"/>
<dbReference type="UniPathway" id="UPA00395">
    <property type="reaction ID" value="UER00653"/>
</dbReference>
<dbReference type="Proteomes" id="UP000001410">
    <property type="component" value="Chromosome"/>
</dbReference>
<dbReference type="GO" id="GO:0005737">
    <property type="term" value="C:cytoplasm"/>
    <property type="evidence" value="ECO:0007669"/>
    <property type="project" value="TreeGrafter"/>
</dbReference>
<dbReference type="GO" id="GO:0004038">
    <property type="term" value="F:allantoinase activity"/>
    <property type="evidence" value="ECO:0007669"/>
    <property type="project" value="UniProtKB-UniRule"/>
</dbReference>
<dbReference type="GO" id="GO:0050897">
    <property type="term" value="F:cobalt ion binding"/>
    <property type="evidence" value="ECO:0007669"/>
    <property type="project" value="InterPro"/>
</dbReference>
<dbReference type="GO" id="GO:0008270">
    <property type="term" value="F:zinc ion binding"/>
    <property type="evidence" value="ECO:0007669"/>
    <property type="project" value="InterPro"/>
</dbReference>
<dbReference type="GO" id="GO:0000256">
    <property type="term" value="P:allantoin catabolic process"/>
    <property type="evidence" value="ECO:0007669"/>
    <property type="project" value="UniProtKB-UniRule"/>
</dbReference>
<dbReference type="GO" id="GO:0006145">
    <property type="term" value="P:purine nucleobase catabolic process"/>
    <property type="evidence" value="ECO:0007669"/>
    <property type="project" value="TreeGrafter"/>
</dbReference>
<dbReference type="CDD" id="cd01315">
    <property type="entry name" value="L-HYD_ALN"/>
    <property type="match status" value="1"/>
</dbReference>
<dbReference type="FunFam" id="3.20.20.140:FF:000013">
    <property type="entry name" value="Allantoinase"/>
    <property type="match status" value="1"/>
</dbReference>
<dbReference type="Gene3D" id="3.20.20.140">
    <property type="entry name" value="Metal-dependent hydrolases"/>
    <property type="match status" value="1"/>
</dbReference>
<dbReference type="Gene3D" id="2.30.40.10">
    <property type="entry name" value="Urease, subunit C, domain 1"/>
    <property type="match status" value="1"/>
</dbReference>
<dbReference type="HAMAP" id="MF_01645">
    <property type="entry name" value="Hydantoinase"/>
    <property type="match status" value="1"/>
</dbReference>
<dbReference type="InterPro" id="IPR017593">
    <property type="entry name" value="Allantoinase"/>
</dbReference>
<dbReference type="InterPro" id="IPR047604">
    <property type="entry name" value="Allantoinase_bact"/>
</dbReference>
<dbReference type="InterPro" id="IPR006680">
    <property type="entry name" value="Amidohydro-rel"/>
</dbReference>
<dbReference type="InterPro" id="IPR050138">
    <property type="entry name" value="DHOase/Allantoinase_Hydrolase"/>
</dbReference>
<dbReference type="InterPro" id="IPR011059">
    <property type="entry name" value="Metal-dep_hydrolase_composite"/>
</dbReference>
<dbReference type="InterPro" id="IPR032466">
    <property type="entry name" value="Metal_Hydrolase"/>
</dbReference>
<dbReference type="NCBIfam" id="TIGR03178">
    <property type="entry name" value="allantoinase"/>
    <property type="match status" value="1"/>
</dbReference>
<dbReference type="NCBIfam" id="NF005960">
    <property type="entry name" value="PRK08044.1"/>
    <property type="match status" value="1"/>
</dbReference>
<dbReference type="PANTHER" id="PTHR43668">
    <property type="entry name" value="ALLANTOINASE"/>
    <property type="match status" value="1"/>
</dbReference>
<dbReference type="PANTHER" id="PTHR43668:SF4">
    <property type="entry name" value="ALLANTOINASE"/>
    <property type="match status" value="1"/>
</dbReference>
<dbReference type="Pfam" id="PF01979">
    <property type="entry name" value="Amidohydro_1"/>
    <property type="match status" value="1"/>
</dbReference>
<dbReference type="SUPFAM" id="SSF51338">
    <property type="entry name" value="Composite domain of metallo-dependent hydrolases"/>
    <property type="match status" value="1"/>
</dbReference>
<dbReference type="SUPFAM" id="SSF51556">
    <property type="entry name" value="Metallo-dependent hydrolases"/>
    <property type="match status" value="1"/>
</dbReference>
<protein>
    <recommendedName>
        <fullName evidence="1">Allantoinase</fullName>
        <ecNumber evidence="1">3.5.2.5</ecNumber>
    </recommendedName>
    <alternativeName>
        <fullName evidence="1">Allantoin-utilizing enzyme</fullName>
    </alternativeName>
</protein>
<reference key="1">
    <citation type="journal article" date="2002" name="Proc. Natl. Acad. Sci. U.S.A.">
        <title>Extensive mosaic structure revealed by the complete genome sequence of uropathogenic Escherichia coli.</title>
        <authorList>
            <person name="Welch R.A."/>
            <person name="Burland V."/>
            <person name="Plunkett G. III"/>
            <person name="Redford P."/>
            <person name="Roesch P."/>
            <person name="Rasko D."/>
            <person name="Buckles E.L."/>
            <person name="Liou S.-R."/>
            <person name="Boutin A."/>
            <person name="Hackett J."/>
            <person name="Stroud D."/>
            <person name="Mayhew G.F."/>
            <person name="Rose D.J."/>
            <person name="Zhou S."/>
            <person name="Schwartz D.C."/>
            <person name="Perna N.T."/>
            <person name="Mobley H.L.T."/>
            <person name="Donnenberg M.S."/>
            <person name="Blattner F.R."/>
        </authorList>
    </citation>
    <scope>NUCLEOTIDE SEQUENCE [LARGE SCALE GENOMIC DNA]</scope>
    <source>
        <strain>CFT073 / ATCC 700928 / UPEC</strain>
    </source>
</reference>
<comment type="function">
    <text evidence="1">Catalyzes the conversion of allantoin (5-ureidohydantoin) to allantoic acid by hydrolytic cleavage of the five-member hydantoin ring.</text>
</comment>
<comment type="catalytic activity">
    <reaction evidence="1">
        <text>(S)-allantoin + H2O = allantoate + H(+)</text>
        <dbReference type="Rhea" id="RHEA:17029"/>
        <dbReference type="ChEBI" id="CHEBI:15377"/>
        <dbReference type="ChEBI" id="CHEBI:15378"/>
        <dbReference type="ChEBI" id="CHEBI:15678"/>
        <dbReference type="ChEBI" id="CHEBI:17536"/>
        <dbReference type="EC" id="3.5.2.5"/>
    </reaction>
</comment>
<comment type="cofactor">
    <cofactor evidence="1">
        <name>Zn(2+)</name>
        <dbReference type="ChEBI" id="CHEBI:29105"/>
    </cofactor>
    <text evidence="1">Binds 2 Zn(2+) ions per subunit.</text>
</comment>
<comment type="pathway">
    <text evidence="1">Nitrogen metabolism; (S)-allantoin degradation; allantoate from (S)-allantoin: step 1/1.</text>
</comment>
<comment type="subunit">
    <text evidence="1">Homotetramer.</text>
</comment>
<comment type="PTM">
    <text evidence="1">Carboxylation allows a single lysine to coordinate two zinc ions.</text>
</comment>
<comment type="similarity">
    <text evidence="1">Belongs to the metallo-dependent hydrolases superfamily. Allantoinase family.</text>
</comment>
<sequence length="453" mass="49588">MSFDLIIKNGTVILENEARVVDIAVKDGKIAAIGQDLGDAKDVMDASGLVVSPGMVDAHTHISEPGRSHWEGYETGTRAAAKGGITTMIEMPLNQLPATVDRASIELKFDAAKGKLTIDAAQLGGLVSYNIDRLHELDEVGVVGFKCFVATCGDRGIDNDFRDVNDWQFFKGAQKLGELGQPVLVHCENALICDALGEEAKREGRVTAHDYVASRPVFTEVEAIRRVLYLAKVAGCRLHVCHVSSPEGVEEVTRARQEGQDVTCESCPHYFVLDTDQFEEIGTLAKCSPPIRDLENQKGMWEKLFNGEIDCLVSDHSPCPPEMKAGNIMKAWGGIAGLQSCMDVMFDEAVQKRGMSLPMFGKLMATNAADIFGLQQKGRIAPGKDADFVFIQPNSSYVLTNDDLEYRHKVSPYVGRTIGARITKTILRGDVIYDIEQGFPVAPKGQFILKHQQ</sequence>
<accession>Q8FK60</accession>
<organism>
    <name type="scientific">Escherichia coli O6:H1 (strain CFT073 / ATCC 700928 / UPEC)</name>
    <dbReference type="NCBI Taxonomy" id="199310"/>
    <lineage>
        <taxon>Bacteria</taxon>
        <taxon>Pseudomonadati</taxon>
        <taxon>Pseudomonadota</taxon>
        <taxon>Gammaproteobacteria</taxon>
        <taxon>Enterobacterales</taxon>
        <taxon>Enterobacteriaceae</taxon>
        <taxon>Escherichia</taxon>
    </lineage>
</organism>